<comment type="function">
    <text evidence="1">Catalyzes the reversible adenylation of nicotinate mononucleotide (NaMN) to nicotinic acid adenine dinucleotide (NaAD).</text>
</comment>
<comment type="catalytic activity">
    <reaction evidence="1">
        <text>nicotinate beta-D-ribonucleotide + ATP + H(+) = deamido-NAD(+) + diphosphate</text>
        <dbReference type="Rhea" id="RHEA:22860"/>
        <dbReference type="ChEBI" id="CHEBI:15378"/>
        <dbReference type="ChEBI" id="CHEBI:30616"/>
        <dbReference type="ChEBI" id="CHEBI:33019"/>
        <dbReference type="ChEBI" id="CHEBI:57502"/>
        <dbReference type="ChEBI" id="CHEBI:58437"/>
        <dbReference type="EC" id="2.7.7.18"/>
    </reaction>
</comment>
<comment type="pathway">
    <text evidence="1">Cofactor biosynthesis; NAD(+) biosynthesis; deamido-NAD(+) from nicotinate D-ribonucleotide: step 1/1.</text>
</comment>
<comment type="similarity">
    <text evidence="1">Belongs to the NadD family.</text>
</comment>
<name>NADD_ECOSM</name>
<feature type="chain" id="PRO_1000192233" description="Probable nicotinate-nucleotide adenylyltransferase">
    <location>
        <begin position="1"/>
        <end position="213"/>
    </location>
</feature>
<sequence>MKSLQALFGGTFDPVHYGHLKPVETLANLIGLTRVTIIPNNVPPHRPQPEANSVQRKHMLELAIADKPLFTLDERELKRNAPSYTAQTLKEWRQEQGPDVPLAFIIGQDSLLTFPTWYEYETILDNAHLIVCRRPGYPLEMAQPQYQQWLEDHLTHNPEDLHLQPAGKIYLAETPWFNISATIIRERLQNGESCEDLLPEPVLTYINQQGLYR</sequence>
<reference key="1">
    <citation type="journal article" date="2008" name="J. Bacteriol.">
        <title>Insights into the environmental resistance gene pool from the genome sequence of the multidrug-resistant environmental isolate Escherichia coli SMS-3-5.</title>
        <authorList>
            <person name="Fricke W.F."/>
            <person name="Wright M.S."/>
            <person name="Lindell A.H."/>
            <person name="Harkins D.M."/>
            <person name="Baker-Austin C."/>
            <person name="Ravel J."/>
            <person name="Stepanauskas R."/>
        </authorList>
    </citation>
    <scope>NUCLEOTIDE SEQUENCE [LARGE SCALE GENOMIC DNA]</scope>
    <source>
        <strain>SMS-3-5 / SECEC</strain>
    </source>
</reference>
<proteinExistence type="inferred from homology"/>
<organism>
    <name type="scientific">Escherichia coli (strain SMS-3-5 / SECEC)</name>
    <dbReference type="NCBI Taxonomy" id="439855"/>
    <lineage>
        <taxon>Bacteria</taxon>
        <taxon>Pseudomonadati</taxon>
        <taxon>Pseudomonadota</taxon>
        <taxon>Gammaproteobacteria</taxon>
        <taxon>Enterobacterales</taxon>
        <taxon>Enterobacteriaceae</taxon>
        <taxon>Escherichia</taxon>
    </lineage>
</organism>
<keyword id="KW-0067">ATP-binding</keyword>
<keyword id="KW-0520">NAD</keyword>
<keyword id="KW-0547">Nucleotide-binding</keyword>
<keyword id="KW-0548">Nucleotidyltransferase</keyword>
<keyword id="KW-0662">Pyridine nucleotide biosynthesis</keyword>
<keyword id="KW-0808">Transferase</keyword>
<gene>
    <name evidence="1" type="primary">nadD</name>
    <name type="ordered locus">EcSMS35_0659</name>
</gene>
<dbReference type="EC" id="2.7.7.18" evidence="1"/>
<dbReference type="EMBL" id="CP000970">
    <property type="protein sequence ID" value="ACB18522.1"/>
    <property type="molecule type" value="Genomic_DNA"/>
</dbReference>
<dbReference type="RefSeq" id="WP_000838889.1">
    <property type="nucleotide sequence ID" value="NC_010498.1"/>
</dbReference>
<dbReference type="SMR" id="B1LL88"/>
<dbReference type="GeneID" id="93776843"/>
<dbReference type="KEGG" id="ecm:EcSMS35_0659"/>
<dbReference type="HOGENOM" id="CLU_069765_0_0_6"/>
<dbReference type="UniPathway" id="UPA00253">
    <property type="reaction ID" value="UER00332"/>
</dbReference>
<dbReference type="Proteomes" id="UP000007011">
    <property type="component" value="Chromosome"/>
</dbReference>
<dbReference type="GO" id="GO:0005524">
    <property type="term" value="F:ATP binding"/>
    <property type="evidence" value="ECO:0007669"/>
    <property type="project" value="UniProtKB-KW"/>
</dbReference>
<dbReference type="GO" id="GO:0004515">
    <property type="term" value="F:nicotinate-nucleotide adenylyltransferase activity"/>
    <property type="evidence" value="ECO:0007669"/>
    <property type="project" value="UniProtKB-UniRule"/>
</dbReference>
<dbReference type="GO" id="GO:0009435">
    <property type="term" value="P:NAD biosynthetic process"/>
    <property type="evidence" value="ECO:0007669"/>
    <property type="project" value="UniProtKB-UniRule"/>
</dbReference>
<dbReference type="CDD" id="cd02165">
    <property type="entry name" value="NMNAT"/>
    <property type="match status" value="1"/>
</dbReference>
<dbReference type="FunFam" id="3.40.50.620:FF:000039">
    <property type="entry name" value="Probable nicotinate-nucleotide adenylyltransferase"/>
    <property type="match status" value="1"/>
</dbReference>
<dbReference type="Gene3D" id="3.40.50.620">
    <property type="entry name" value="HUPs"/>
    <property type="match status" value="1"/>
</dbReference>
<dbReference type="HAMAP" id="MF_00244">
    <property type="entry name" value="NaMN_adenylyltr"/>
    <property type="match status" value="1"/>
</dbReference>
<dbReference type="InterPro" id="IPR004821">
    <property type="entry name" value="Cyt_trans-like"/>
</dbReference>
<dbReference type="InterPro" id="IPR005248">
    <property type="entry name" value="NadD/NMNAT"/>
</dbReference>
<dbReference type="InterPro" id="IPR014729">
    <property type="entry name" value="Rossmann-like_a/b/a_fold"/>
</dbReference>
<dbReference type="NCBIfam" id="TIGR00125">
    <property type="entry name" value="cyt_tran_rel"/>
    <property type="match status" value="1"/>
</dbReference>
<dbReference type="NCBIfam" id="TIGR00482">
    <property type="entry name" value="nicotinate (nicotinamide) nucleotide adenylyltransferase"/>
    <property type="match status" value="1"/>
</dbReference>
<dbReference type="NCBIfam" id="NF000839">
    <property type="entry name" value="PRK00071.1-1"/>
    <property type="match status" value="1"/>
</dbReference>
<dbReference type="NCBIfam" id="NF000840">
    <property type="entry name" value="PRK00071.1-3"/>
    <property type="match status" value="1"/>
</dbReference>
<dbReference type="PANTHER" id="PTHR39321">
    <property type="entry name" value="NICOTINATE-NUCLEOTIDE ADENYLYLTRANSFERASE-RELATED"/>
    <property type="match status" value="1"/>
</dbReference>
<dbReference type="PANTHER" id="PTHR39321:SF3">
    <property type="entry name" value="PHOSPHOPANTETHEINE ADENYLYLTRANSFERASE"/>
    <property type="match status" value="1"/>
</dbReference>
<dbReference type="Pfam" id="PF01467">
    <property type="entry name" value="CTP_transf_like"/>
    <property type="match status" value="1"/>
</dbReference>
<dbReference type="SUPFAM" id="SSF52374">
    <property type="entry name" value="Nucleotidylyl transferase"/>
    <property type="match status" value="1"/>
</dbReference>
<accession>B1LL88</accession>
<evidence type="ECO:0000255" key="1">
    <source>
        <dbReference type="HAMAP-Rule" id="MF_00244"/>
    </source>
</evidence>
<protein>
    <recommendedName>
        <fullName evidence="1">Probable nicotinate-nucleotide adenylyltransferase</fullName>
        <ecNumber evidence="1">2.7.7.18</ecNumber>
    </recommendedName>
    <alternativeName>
        <fullName evidence="1">Deamido-NAD(+) diphosphorylase</fullName>
    </alternativeName>
    <alternativeName>
        <fullName evidence="1">Deamido-NAD(+) pyrophosphorylase</fullName>
    </alternativeName>
    <alternativeName>
        <fullName evidence="1">Nicotinate mononucleotide adenylyltransferase</fullName>
        <shortName evidence="1">NaMN adenylyltransferase</shortName>
    </alternativeName>
</protein>